<protein>
    <recommendedName>
        <fullName evidence="2">Chaperonin-containing T-complex member BBS12</fullName>
    </recommendedName>
    <alternativeName>
        <fullName>Bardet-Biedl syndrome 12 protein homolog</fullName>
    </alternativeName>
</protein>
<comment type="function">
    <text evidence="1">Component of the chaperonin-containing T-complex (TRiC), a molecular chaperone complex that assists the folding of proteins upon ATP hydrolysis. As part of the TRiC complex may play a role in the assembly of BBSome, a complex involved in ciliogenesis regulating transports vesicles to the cilia. Involved in adipogenic differentiation.</text>
</comment>
<comment type="subunit">
    <text evidence="1">Component of the chaperonin-containing T-complex (TRiC), a heterooligomeric complex of about 850 to 900 kDa that forms two stacked rings, 12 to 16 nm in diameter. Interacts with MKKS.</text>
</comment>
<comment type="subcellular location">
    <subcellularLocation>
        <location evidence="1">Cell projection</location>
        <location evidence="1">Cilium</location>
    </subcellularLocation>
    <text evidence="1">Located within the basal body of the primary cilium of differentiating preadipocytes.</text>
</comment>
<comment type="similarity">
    <text evidence="2">Belongs to the TCP-1 chaperonin family. BBS12 subfamily.</text>
</comment>
<comment type="sequence caution" evidence="2">
    <conflict type="erroneous initiation">
        <sequence resource="EMBL-CDS" id="CAI26237"/>
    </conflict>
</comment>
<comment type="sequence caution" evidence="2">
    <conflict type="erroneous initiation">
        <sequence resource="EMBL-CDS" id="CAM14822"/>
    </conflict>
</comment>
<dbReference type="EMBL" id="AL645982">
    <property type="protein sequence ID" value="CAI26237.1"/>
    <property type="status" value="ALT_INIT"/>
    <property type="molecule type" value="Genomic_DNA"/>
</dbReference>
<dbReference type="EMBL" id="AL691478">
    <property type="protein sequence ID" value="CAM14822.1"/>
    <property type="status" value="ALT_INIT"/>
    <property type="molecule type" value="Genomic_DNA"/>
</dbReference>
<dbReference type="CCDS" id="CCDS38417.1"/>
<dbReference type="RefSeq" id="NP_001008502.2">
    <property type="nucleotide sequence ID" value="NM_001008502.2"/>
</dbReference>
<dbReference type="RefSeq" id="XP_006535543.1">
    <property type="nucleotide sequence ID" value="XM_006535480.3"/>
</dbReference>
<dbReference type="RefSeq" id="XP_011247984.1">
    <property type="nucleotide sequence ID" value="XM_011249682.3"/>
</dbReference>
<dbReference type="RefSeq" id="XP_011247985.1">
    <property type="nucleotide sequence ID" value="XM_011249683.1"/>
</dbReference>
<dbReference type="RefSeq" id="XP_036018990.1">
    <property type="nucleotide sequence ID" value="XM_036163097.1"/>
</dbReference>
<dbReference type="FunCoup" id="Q5SUD9">
    <property type="interactions" value="566"/>
</dbReference>
<dbReference type="STRING" id="10090.ENSMUSP00000052179"/>
<dbReference type="iPTMnet" id="Q5SUD9"/>
<dbReference type="PhosphoSitePlus" id="Q5SUD9"/>
<dbReference type="PaxDb" id="10090-ENSMUSP00000052179"/>
<dbReference type="ProteomicsDB" id="273546"/>
<dbReference type="Antibodypedia" id="26856">
    <property type="antibodies" value="45 antibodies from 13 providers"/>
</dbReference>
<dbReference type="DNASU" id="241950"/>
<dbReference type="Ensembl" id="ENSMUST00000057975.8">
    <property type="protein sequence ID" value="ENSMUSP00000052179.8"/>
    <property type="gene ID" value="ENSMUSG00000051444.10"/>
</dbReference>
<dbReference type="GeneID" id="241950"/>
<dbReference type="KEGG" id="mmu:241950"/>
<dbReference type="UCSC" id="uc008pan.2">
    <property type="organism name" value="mouse"/>
</dbReference>
<dbReference type="AGR" id="MGI:2686651"/>
<dbReference type="CTD" id="166379"/>
<dbReference type="MGI" id="MGI:2686651">
    <property type="gene designation" value="Bbs12"/>
</dbReference>
<dbReference type="VEuPathDB" id="HostDB:ENSMUSG00000051444"/>
<dbReference type="eggNOG" id="ENOG502QUYD">
    <property type="taxonomic scope" value="Eukaryota"/>
</dbReference>
<dbReference type="GeneTree" id="ENSGT00390000008984"/>
<dbReference type="HOGENOM" id="CLU_025269_0_0_1"/>
<dbReference type="InParanoid" id="Q5SUD9"/>
<dbReference type="OMA" id="CPFLQIP"/>
<dbReference type="OrthoDB" id="10037098at2759"/>
<dbReference type="PhylomeDB" id="Q5SUD9"/>
<dbReference type="TreeFam" id="TF330844"/>
<dbReference type="BioGRID-ORCS" id="241950">
    <property type="hits" value="4 hits in 78 CRISPR screens"/>
</dbReference>
<dbReference type="PRO" id="PR:Q5SUD9"/>
<dbReference type="Proteomes" id="UP000000589">
    <property type="component" value="Chromosome 3"/>
</dbReference>
<dbReference type="RNAct" id="Q5SUD9">
    <property type="molecule type" value="protein"/>
</dbReference>
<dbReference type="Bgee" id="ENSMUSG00000051444">
    <property type="expression patterns" value="Expressed in metanephric proximal tubule and 171 other cell types or tissues"/>
</dbReference>
<dbReference type="ExpressionAtlas" id="Q5SUD9">
    <property type="expression patterns" value="baseline and differential"/>
</dbReference>
<dbReference type="GO" id="GO:0005929">
    <property type="term" value="C:cilium"/>
    <property type="evidence" value="ECO:0007669"/>
    <property type="project" value="UniProtKB-SubCell"/>
</dbReference>
<dbReference type="GO" id="GO:0005524">
    <property type="term" value="F:ATP binding"/>
    <property type="evidence" value="ECO:0007669"/>
    <property type="project" value="InterPro"/>
</dbReference>
<dbReference type="GO" id="GO:0051131">
    <property type="term" value="P:chaperone-mediated protein complex assembly"/>
    <property type="evidence" value="ECO:0000266"/>
    <property type="project" value="MGI"/>
</dbReference>
<dbReference type="GO" id="GO:0042755">
    <property type="term" value="P:eating behavior"/>
    <property type="evidence" value="ECO:0000315"/>
    <property type="project" value="MGI"/>
</dbReference>
<dbReference type="GO" id="GO:0045444">
    <property type="term" value="P:fat cell differentiation"/>
    <property type="evidence" value="ECO:0000315"/>
    <property type="project" value="MGI"/>
</dbReference>
<dbReference type="GO" id="GO:0042073">
    <property type="term" value="P:intraciliary transport"/>
    <property type="evidence" value="ECO:0000315"/>
    <property type="project" value="MGI"/>
</dbReference>
<dbReference type="GO" id="GO:0045599">
    <property type="term" value="P:negative regulation of fat cell differentiation"/>
    <property type="evidence" value="ECO:0000315"/>
    <property type="project" value="MGI"/>
</dbReference>
<dbReference type="GO" id="GO:2000737">
    <property type="term" value="P:negative regulation of stem cell differentiation"/>
    <property type="evidence" value="ECO:0000315"/>
    <property type="project" value="MGI"/>
</dbReference>
<dbReference type="GO" id="GO:0045494">
    <property type="term" value="P:photoreceptor cell maintenance"/>
    <property type="evidence" value="ECO:0000315"/>
    <property type="project" value="MGI"/>
</dbReference>
<dbReference type="GO" id="GO:0048863">
    <property type="term" value="P:stem cell differentiation"/>
    <property type="evidence" value="ECO:0000315"/>
    <property type="project" value="MGI"/>
</dbReference>
<dbReference type="Gene3D" id="3.50.7.10">
    <property type="entry name" value="GroEL"/>
    <property type="match status" value="1"/>
</dbReference>
<dbReference type="Gene3D" id="1.10.560.10">
    <property type="entry name" value="GroEL-like equatorial domain"/>
    <property type="match status" value="2"/>
</dbReference>
<dbReference type="Gene3D" id="3.30.260.10">
    <property type="entry name" value="TCP-1-like chaperonin intermediate domain"/>
    <property type="match status" value="1"/>
</dbReference>
<dbReference type="InterPro" id="IPR042984">
    <property type="entry name" value="BBS12"/>
</dbReference>
<dbReference type="InterPro" id="IPR002423">
    <property type="entry name" value="Cpn60/GroEL/TCP-1"/>
</dbReference>
<dbReference type="InterPro" id="IPR027409">
    <property type="entry name" value="GroEL-like_apical_dom_sf"/>
</dbReference>
<dbReference type="InterPro" id="IPR027413">
    <property type="entry name" value="GROEL-like_equatorial_sf"/>
</dbReference>
<dbReference type="InterPro" id="IPR027410">
    <property type="entry name" value="TCP-1-like_intermed_sf"/>
</dbReference>
<dbReference type="PANTHER" id="PTHR46883">
    <property type="entry name" value="BARDET-BIEDL SYNDROME 12 PROTEIN"/>
    <property type="match status" value="1"/>
</dbReference>
<dbReference type="PANTHER" id="PTHR46883:SF1">
    <property type="entry name" value="BARDET-BIEDL SYNDROME 12 PROTEIN"/>
    <property type="match status" value="1"/>
</dbReference>
<dbReference type="Pfam" id="PF00118">
    <property type="entry name" value="Cpn60_TCP1"/>
    <property type="match status" value="1"/>
</dbReference>
<dbReference type="SUPFAM" id="SSF52029">
    <property type="entry name" value="GroEL apical domain-like"/>
    <property type="match status" value="1"/>
</dbReference>
<dbReference type="SUPFAM" id="SSF48592">
    <property type="entry name" value="GroEL equatorial domain-like"/>
    <property type="match status" value="1"/>
</dbReference>
<evidence type="ECO:0000250" key="1">
    <source>
        <dbReference type="UniProtKB" id="Q6ZW61"/>
    </source>
</evidence>
<evidence type="ECO:0000305" key="2"/>
<accession>Q5SUD9</accession>
<accession>A2AGT2</accession>
<feature type="chain" id="PRO_0000301982" description="Chaperonin-containing T-complex member BBS12">
    <location>
        <begin position="1"/>
        <end position="708"/>
    </location>
</feature>
<feature type="sequence conflict" description="In Ref. 1; CAI26237." evidence="2" ref="1">
    <original>N</original>
    <variation>S</variation>
    <location>
        <position position="136"/>
    </location>
</feature>
<feature type="sequence conflict" description="In Ref. 1; CAI26237." evidence="2" ref="1">
    <original>R</original>
    <variation>H</variation>
    <location>
        <position position="174"/>
    </location>
</feature>
<feature type="sequence conflict" description="In Ref. 1; CAI26237." evidence="2" ref="1">
    <original>V</original>
    <variation>I</variation>
    <location>
        <position position="262"/>
    </location>
</feature>
<feature type="sequence conflict" description="In Ref. 1; CAI26237." evidence="2" ref="1">
    <original>K</original>
    <variation>R</variation>
    <location>
        <position position="425"/>
    </location>
</feature>
<feature type="sequence conflict" description="In Ref. 1; CAI26237." evidence="2" ref="1">
    <original>S</original>
    <variation>C</variation>
    <location>
        <position position="588"/>
    </location>
</feature>
<sequence>MEMACRVINRRRHVGLQQLLSFAQTGRSFLGPVKATKFITDAECHESVLISSTVRLLEGLDLTCAVGHLLNEAVQAQNNTYKIGTSTLLFLVGAWSRAVEDCLHLGIPTTVIVSVMSEGLNSCIEAVVSLQVPIHNVFDHMDNTSTVYKLETVNATLCPFLQDPSGSGLLQEKRDFKDATSPLLSTYSLSGRHAESPKFFKPQNNLETEKNTLQVLKNNLYTDSFCKKSALAHSRHFNRTDNSHWISRHDGFLEQLESTPKVLRCNDFGELAVGLSHGDHSSMALAKAAVRLQWQSLCLQQANWMAPFMFDISRLLTCCIPGLPETFSRVGLGYVTFVTMSSITLIKELQDQPFRVILIEGDLTESYRHLGFNKSVNIKTKLDSGELSEDSAEELWTNHVLQVLIQFNVTLILVQGSVSEHLTEKCMHSKRLVIGAVNGSVLQAFAEATRAVPVAYVTQVNEDCVGSGVSVTFWMSPHDINRSNRIAILLTAEGINLITAVLTSPASAQMETKEDRFWSCVYRLYHALKEEKVFLGGGAVEFLCLSHLQILAEQSLNRGNHACLGWLPDSSSWMASSLSVYRPTVLKSLAGGWHEFLSAIMCNTATHPSAVEARTFIQQHVQNAIDSGSPSSYILSEYSKLSSGVFHSGISDNLELVPRVYDTVTPKIEAWRRALDVVLLVLQTDSEIITGLVHTEMNSQELDGVLFL</sequence>
<proteinExistence type="inferred from homology"/>
<gene>
    <name type="primary">Bbs12</name>
    <name type="synonym">Gm1805</name>
</gene>
<keyword id="KW-0966">Cell projection</keyword>
<keyword id="KW-0969">Cilium</keyword>
<keyword id="KW-1185">Reference proteome</keyword>
<organism>
    <name type="scientific">Mus musculus</name>
    <name type="common">Mouse</name>
    <dbReference type="NCBI Taxonomy" id="10090"/>
    <lineage>
        <taxon>Eukaryota</taxon>
        <taxon>Metazoa</taxon>
        <taxon>Chordata</taxon>
        <taxon>Craniata</taxon>
        <taxon>Vertebrata</taxon>
        <taxon>Euteleostomi</taxon>
        <taxon>Mammalia</taxon>
        <taxon>Eutheria</taxon>
        <taxon>Euarchontoglires</taxon>
        <taxon>Glires</taxon>
        <taxon>Rodentia</taxon>
        <taxon>Myomorpha</taxon>
        <taxon>Muroidea</taxon>
        <taxon>Muridae</taxon>
        <taxon>Murinae</taxon>
        <taxon>Mus</taxon>
        <taxon>Mus</taxon>
    </lineage>
</organism>
<name>BBS12_MOUSE</name>
<reference key="1">
    <citation type="journal article" date="2009" name="PLoS Biol.">
        <title>Lineage-specific biology revealed by a finished genome assembly of the mouse.</title>
        <authorList>
            <person name="Church D.M."/>
            <person name="Goodstadt L."/>
            <person name="Hillier L.W."/>
            <person name="Zody M.C."/>
            <person name="Goldstein S."/>
            <person name="She X."/>
            <person name="Bult C.J."/>
            <person name="Agarwala R."/>
            <person name="Cherry J.L."/>
            <person name="DiCuccio M."/>
            <person name="Hlavina W."/>
            <person name="Kapustin Y."/>
            <person name="Meric P."/>
            <person name="Maglott D."/>
            <person name="Birtle Z."/>
            <person name="Marques A.C."/>
            <person name="Graves T."/>
            <person name="Zhou S."/>
            <person name="Teague B."/>
            <person name="Potamousis K."/>
            <person name="Churas C."/>
            <person name="Place M."/>
            <person name="Herschleb J."/>
            <person name="Runnheim R."/>
            <person name="Forrest D."/>
            <person name="Amos-Landgraf J."/>
            <person name="Schwartz D.C."/>
            <person name="Cheng Z."/>
            <person name="Lindblad-Toh K."/>
            <person name="Eichler E.E."/>
            <person name="Ponting C.P."/>
        </authorList>
    </citation>
    <scope>NUCLEOTIDE SEQUENCE [LARGE SCALE GENOMIC DNA]</scope>
    <source>
        <strain>C57BL/6J</strain>
    </source>
</reference>